<accession>P15575</accession>
<protein>
    <recommendedName>
        <fullName>Band 3 anion transport protein</fullName>
    </recommendedName>
    <alternativeName>
        <fullName>Solute carrier family 4 member 1</fullName>
    </alternativeName>
</protein>
<evidence type="ECO:0000250" key="1">
    <source>
        <dbReference type="UniProtKB" id="P02730"/>
    </source>
</evidence>
<evidence type="ECO:0000256" key="2">
    <source>
        <dbReference type="SAM" id="MobiDB-lite"/>
    </source>
</evidence>
<evidence type="ECO:0000269" key="3">
    <source>
    </source>
</evidence>
<evidence type="ECO:0000305" key="4"/>
<keyword id="KW-0039">Anion exchange</keyword>
<keyword id="KW-1003">Cell membrane</keyword>
<keyword id="KW-0325">Glycoprotein</keyword>
<keyword id="KW-0406">Ion transport</keyword>
<keyword id="KW-0472">Membrane</keyword>
<keyword id="KW-1185">Reference proteome</keyword>
<keyword id="KW-0812">Transmembrane</keyword>
<keyword id="KW-1133">Transmembrane helix</keyword>
<keyword id="KW-0813">Transport</keyword>
<reference key="1">
    <citation type="journal article" date="1988" name="Mol. Cell. Biol.">
        <title>Two different mRNAs are transcribed from a single genomic locus encoding the chicken erythrocyte anion transport proteins (band 3).</title>
        <authorList>
            <person name="Kim H.R.C."/>
            <person name="Yew N.S."/>
            <person name="Ansorge W."/>
            <person name="Voss H."/>
            <person name="Schwager C."/>
            <person name="Vennstroem B."/>
            <person name="Zenke M."/>
            <person name="Engel J.D."/>
        </authorList>
    </citation>
    <scope>NUCLEOTIDE SEQUENCE [MRNA]</scope>
    <scope>TISSUE SPECIFICITY</scope>
</reference>
<sequence>MEGPGQDTEDALRRSLDPEGYEDTKGSRTSLGTMSNPLVSDVDLEAAGSRQPTAHRDTYEGYVELHELVLDSRKDPCWMEAGRWLHLEESMEPGGAWGSHLPLLTYHSLLELHRAFAKGVVLLDVAANSLAAVAHVLLDQLIYEGQLKPQHRDDVLRALLLRHKHPSEAESVWTLPAAQLQCSDGEQKDADERALLRDQRAVEMRELHGAGQSPSRAQLGPQLHQQLPEDTEATLVLVACAAFLEQPLLALVRLGAPCPDAVLAVPLPVRFVLTVLGPDSPRLSYHEIRRAAATVMADRVFRRDAYLCGGRAELLGGLQGFLEASIVLPPQEVPSEQHLHALIPLQRHAVRRRYQHPDTVRSPGGPTAPKDTGDKGQAPQDDDPLLRTRRPFGGLVRDIRRRYPKYLSDIRDALNPQCLAAVIFIYFAALSPAITFGGLLGEKTRGMMGVSELLLSTSVQCLLFSLLSAQPLLVVGFSGPLLVFEEAFFRFCEDHGLEYIVGRVWIGFWLILLVLLVVACEGTVLVRYLSRYTQEIFSFLISLIFIYETFAKLVTIFEAHPLQQSYDTDVSTEPSVPKPNTALLSLVLMAGTFFLALFLRQFKNSVFLPGKVRRLIGDFGVPISIFVMALADFFIKDTYTQKLKVPRGLEVTNGTARGWFIHPMGSATPFPIWMMFASPVPALLVFILIFLETQITTLIVSKPERKLVKGSGFHLDLLLIVAMGGLAALFGMPWLSATTVRTITHANALTVVGKSAVPGERAHIVEVKEQRLSGLLVAVLIGVSILMEPILKYIPLAVLFGIFLYMGVTSLFGIQLFDRILLLLMPPKYHPKEPYVTRVKTWRITSSPLTQILVVALLWGVKVSPASLRCPFVLVLTVPLRRLLLPRIFSEIELKCLDTDDAVVTFEEAEGQDVYNEVQMPS</sequence>
<comment type="function">
    <text evidence="1">Functions both as a transporter that mediates electroneutral anion exchange across the cell membrane and as a structural protein. Major integral membrane glycoprotein of the erythrocyte membrane; required for normal flexibility and stability of the erythrocyte membrane and for normal erythrocyte shape via the interactions of its cytoplasmic domain with cytoskeletal proteins, glycolytic enzymes, and hemoglobin. Functions as a transporter that mediates the 1:1 exchange of inorganic anions across the erythrocyte membrane. Mediates chloride-bicarbonate exchange in the kidney, and is required for normal acidification of the urine.</text>
</comment>
<comment type="catalytic activity">
    <reaction evidence="1">
        <text>hydrogencarbonate(in) + chloride(out) = hydrogencarbonate(out) + chloride(in)</text>
        <dbReference type="Rhea" id="RHEA:72363"/>
        <dbReference type="ChEBI" id="CHEBI:17544"/>
        <dbReference type="ChEBI" id="CHEBI:17996"/>
    </reaction>
</comment>
<comment type="subunit">
    <text evidence="1">A dimer in solution, it spans the membrane asymmetrically and appears to be tetrameric.</text>
</comment>
<comment type="subcellular location">
    <subcellularLocation>
        <location evidence="1">Cell membrane</location>
        <topology evidence="1">Multi-pass membrane protein</topology>
    </subcellularLocation>
    <subcellularLocation>
        <location evidence="1">Basolateral cell membrane</location>
        <topology evidence="1">Multi-pass membrane protein</topology>
    </subcellularLocation>
    <text evidence="1">Detected in the erythrocyte cell membrane and on the basolateral membrane of alpha-intercalated cells in the collecting duct in the kidney.</text>
</comment>
<comment type="tissue specificity">
    <text evidence="3">Erythrocytes.</text>
</comment>
<comment type="similarity">
    <text evidence="4">Belongs to the anion exchanger (TC 2.A.31) family.</text>
</comment>
<proteinExistence type="evidence at transcript level"/>
<dbReference type="EMBL" id="M23404">
    <property type="protein sequence ID" value="AAA48753.1"/>
    <property type="molecule type" value="mRNA"/>
</dbReference>
<dbReference type="PIR" id="A30816">
    <property type="entry name" value="A30816"/>
</dbReference>
<dbReference type="RefSeq" id="NP_001277483.1">
    <property type="nucleotide sequence ID" value="NM_001290554.1"/>
</dbReference>
<dbReference type="SMR" id="P15575"/>
<dbReference type="FunCoup" id="P15575">
    <property type="interactions" value="629"/>
</dbReference>
<dbReference type="STRING" id="9031.ENSGALP00000045469"/>
<dbReference type="GlyCosmos" id="P15575">
    <property type="glycosylation" value="1 site, No reported glycans"/>
</dbReference>
<dbReference type="GlyGen" id="P15575">
    <property type="glycosylation" value="2 sites"/>
</dbReference>
<dbReference type="PaxDb" id="9031-ENSGALP00000041211"/>
<dbReference type="GeneID" id="396532"/>
<dbReference type="KEGG" id="gga:396532"/>
<dbReference type="CTD" id="6521"/>
<dbReference type="VEuPathDB" id="HostDB:geneid_396532"/>
<dbReference type="eggNOG" id="KOG1172">
    <property type="taxonomic scope" value="Eukaryota"/>
</dbReference>
<dbReference type="InParanoid" id="P15575"/>
<dbReference type="OrthoDB" id="1735926at2759"/>
<dbReference type="PhylomeDB" id="P15575"/>
<dbReference type="PRO" id="PR:P15575"/>
<dbReference type="Proteomes" id="UP000000539">
    <property type="component" value="Unassembled WGS sequence"/>
</dbReference>
<dbReference type="GO" id="GO:0016323">
    <property type="term" value="C:basolateral plasma membrane"/>
    <property type="evidence" value="ECO:0000318"/>
    <property type="project" value="GO_Central"/>
</dbReference>
<dbReference type="GO" id="GO:0005886">
    <property type="term" value="C:plasma membrane"/>
    <property type="evidence" value="ECO:0000250"/>
    <property type="project" value="UniProtKB"/>
</dbReference>
<dbReference type="GO" id="GO:0015106">
    <property type="term" value="F:bicarbonate transmembrane transporter activity"/>
    <property type="evidence" value="ECO:0000250"/>
    <property type="project" value="UniProtKB"/>
</dbReference>
<dbReference type="GO" id="GO:0140900">
    <property type="term" value="F:chloride:bicarbonate antiporter activity"/>
    <property type="evidence" value="ECO:0000250"/>
    <property type="project" value="UniProtKB"/>
</dbReference>
<dbReference type="GO" id="GO:0005452">
    <property type="term" value="F:solute:inorganic anion antiporter activity"/>
    <property type="evidence" value="ECO:0000250"/>
    <property type="project" value="UniProtKB"/>
</dbReference>
<dbReference type="GO" id="GO:0015701">
    <property type="term" value="P:bicarbonate transport"/>
    <property type="evidence" value="ECO:0000250"/>
    <property type="project" value="UniProtKB"/>
</dbReference>
<dbReference type="GO" id="GO:0051453">
    <property type="term" value="P:regulation of intracellular pH"/>
    <property type="evidence" value="ECO:0000318"/>
    <property type="project" value="GO_Central"/>
</dbReference>
<dbReference type="GO" id="GO:0055085">
    <property type="term" value="P:transmembrane transport"/>
    <property type="evidence" value="ECO:0000318"/>
    <property type="project" value="GO_Central"/>
</dbReference>
<dbReference type="FunFam" id="1.10.287.570:FF:000001">
    <property type="entry name" value="Anion exchange protein"/>
    <property type="match status" value="1"/>
</dbReference>
<dbReference type="Gene3D" id="1.10.287.570">
    <property type="entry name" value="Helical hairpin bin"/>
    <property type="match status" value="1"/>
</dbReference>
<dbReference type="Gene3D" id="3.40.930.10">
    <property type="entry name" value="Mannitol-specific EII, Chain A"/>
    <property type="match status" value="1"/>
</dbReference>
<dbReference type="InterPro" id="IPR001717">
    <property type="entry name" value="Anion_exchange"/>
</dbReference>
<dbReference type="InterPro" id="IPR002977">
    <property type="entry name" value="Anion_exchange_1"/>
</dbReference>
<dbReference type="InterPro" id="IPR018241">
    <property type="entry name" value="Anion_exchange_CS"/>
</dbReference>
<dbReference type="InterPro" id="IPR013769">
    <property type="entry name" value="Band3_cytoplasmic_dom"/>
</dbReference>
<dbReference type="InterPro" id="IPR011531">
    <property type="entry name" value="HCO3_transpt-like_TM_dom"/>
</dbReference>
<dbReference type="InterPro" id="IPR003020">
    <property type="entry name" value="HCO3_transpt_euk"/>
</dbReference>
<dbReference type="InterPro" id="IPR016152">
    <property type="entry name" value="PTrfase/Anion_transptr"/>
</dbReference>
<dbReference type="NCBIfam" id="TIGR00834">
    <property type="entry name" value="ae"/>
    <property type="match status" value="1"/>
</dbReference>
<dbReference type="PANTHER" id="PTHR11453">
    <property type="entry name" value="ANION EXCHANGE PROTEIN"/>
    <property type="match status" value="1"/>
</dbReference>
<dbReference type="PANTHER" id="PTHR11453:SF12">
    <property type="entry name" value="BAND 3 ANION TRANSPORT PROTEIN"/>
    <property type="match status" value="1"/>
</dbReference>
<dbReference type="Pfam" id="PF07565">
    <property type="entry name" value="Band_3_cyto"/>
    <property type="match status" value="1"/>
</dbReference>
<dbReference type="Pfam" id="PF00955">
    <property type="entry name" value="HCO3_cotransp"/>
    <property type="match status" value="2"/>
</dbReference>
<dbReference type="PRINTS" id="PR00165">
    <property type="entry name" value="ANIONEXCHNGR"/>
</dbReference>
<dbReference type="PRINTS" id="PR01187">
    <property type="entry name" value="ANIONEXHNGR1"/>
</dbReference>
<dbReference type="PRINTS" id="PR01231">
    <property type="entry name" value="HCO3TRNSPORT"/>
</dbReference>
<dbReference type="SUPFAM" id="SSF55804">
    <property type="entry name" value="Phoshotransferase/anion transport protein"/>
    <property type="match status" value="1"/>
</dbReference>
<dbReference type="PROSITE" id="PS00219">
    <property type="entry name" value="ANION_EXCHANGER_1"/>
    <property type="match status" value="1"/>
</dbReference>
<dbReference type="PROSITE" id="PS00220">
    <property type="entry name" value="ANION_EXCHANGER_2"/>
    <property type="match status" value="1"/>
</dbReference>
<organism>
    <name type="scientific">Gallus gallus</name>
    <name type="common">Chicken</name>
    <dbReference type="NCBI Taxonomy" id="9031"/>
    <lineage>
        <taxon>Eukaryota</taxon>
        <taxon>Metazoa</taxon>
        <taxon>Chordata</taxon>
        <taxon>Craniata</taxon>
        <taxon>Vertebrata</taxon>
        <taxon>Euteleostomi</taxon>
        <taxon>Archelosauria</taxon>
        <taxon>Archosauria</taxon>
        <taxon>Dinosauria</taxon>
        <taxon>Saurischia</taxon>
        <taxon>Theropoda</taxon>
        <taxon>Coelurosauria</taxon>
        <taxon>Aves</taxon>
        <taxon>Neognathae</taxon>
        <taxon>Galloanserae</taxon>
        <taxon>Galliformes</taxon>
        <taxon>Phasianidae</taxon>
        <taxon>Phasianinae</taxon>
        <taxon>Gallus</taxon>
    </lineage>
</organism>
<name>B3AT_CHICK</name>
<gene>
    <name type="primary">SLC4A1</name>
</gene>
<feature type="chain" id="PRO_0000079212" description="Band 3 anion transport protein">
    <location>
        <begin position="1"/>
        <end position="922"/>
    </location>
</feature>
<feature type="topological domain" description="Cytoplasmic" evidence="1">
    <location>
        <begin position="1"/>
        <end position="416"/>
    </location>
</feature>
<feature type="transmembrane region" description="Helical; Name=1" evidence="1">
    <location>
        <begin position="417"/>
        <end position="440"/>
    </location>
</feature>
<feature type="topological domain" description="Extracellular" evidence="1">
    <location>
        <begin position="441"/>
        <end position="448"/>
    </location>
</feature>
<feature type="transmembrane region" description="Helical; Name=2" evidence="1">
    <location>
        <begin position="449"/>
        <end position="469"/>
    </location>
</feature>
<feature type="topological domain" description="Cytoplasmic" evidence="1">
    <location>
        <begin position="470"/>
        <end position="472"/>
    </location>
</feature>
<feature type="transmembrane region" description="Discontinuously helical; Name=3" evidence="1">
    <location>
        <begin position="473"/>
        <end position="489"/>
    </location>
</feature>
<feature type="topological domain" description="Extracellular" evidence="1">
    <location>
        <begin position="490"/>
        <end position="498"/>
    </location>
</feature>
<feature type="transmembrane region" description="Helical; Name=4" evidence="1">
    <location>
        <begin position="499"/>
        <end position="519"/>
    </location>
</feature>
<feature type="topological domain" description="Cytoplasmic" evidence="1">
    <location>
        <begin position="520"/>
        <end position="531"/>
    </location>
</feature>
<feature type="transmembrane region" description="Helical; Name=5" evidence="1">
    <location>
        <begin position="532"/>
        <end position="554"/>
    </location>
</feature>
<feature type="topological domain" description="Extracellular" evidence="1">
    <location>
        <begin position="555"/>
        <end position="581"/>
    </location>
</feature>
<feature type="transmembrane region" description="Helical; Name=6" evidence="1">
    <location>
        <begin position="582"/>
        <end position="602"/>
    </location>
</feature>
<feature type="topological domain" description="Cytoplasmic" evidence="1">
    <location>
        <begin position="603"/>
        <end position="613"/>
    </location>
</feature>
<feature type="transmembrane region" description="Helical; Name=7" evidence="1">
    <location>
        <begin position="614"/>
        <end position="634"/>
    </location>
</feature>
<feature type="topological domain" description="Extracellular" evidence="1">
    <location>
        <begin position="635"/>
        <end position="674"/>
    </location>
</feature>
<feature type="transmembrane region" description="Helical; Name=8" evidence="1">
    <location>
        <begin position="675"/>
        <end position="695"/>
    </location>
</feature>
<feature type="topological domain" description="Cytoplasmic" evidence="1">
    <location>
        <begin position="696"/>
        <end position="711"/>
    </location>
</feature>
<feature type="transmembrane region" description="Helical; Name=9" evidence="1">
    <location>
        <begin position="712"/>
        <end position="730"/>
    </location>
</feature>
<feature type="transmembrane region" description="Discontinuously helical; Name=10" evidence="1">
    <location>
        <begin position="731"/>
        <end position="748"/>
    </location>
</feature>
<feature type="topological domain" description="Cytoplasmic" evidence="1">
    <location>
        <begin position="749"/>
        <end position="771"/>
    </location>
</feature>
<feature type="transmembrane region" description="Helical; Name=11" evidence="1">
    <location>
        <begin position="772"/>
        <end position="792"/>
    </location>
</feature>
<feature type="transmembrane region" description="Helical; Name=12" evidence="1">
    <location>
        <begin position="793"/>
        <end position="811"/>
    </location>
</feature>
<feature type="topological domain" description="Cytoplasmic" evidence="1">
    <location>
        <begin position="812"/>
        <end position="849"/>
    </location>
</feature>
<feature type="intramembrane region" description="Discontinuously helical" evidence="1">
    <location>
        <begin position="850"/>
        <end position="880"/>
    </location>
</feature>
<feature type="topological domain" description="Cytoplasmic" evidence="1">
    <location>
        <begin position="881"/>
        <end position="922"/>
    </location>
</feature>
<feature type="region of interest" description="Disordered" evidence="2">
    <location>
        <begin position="1"/>
        <end position="36"/>
    </location>
</feature>
<feature type="region of interest" description="Disordered" evidence="2">
    <location>
        <begin position="355"/>
        <end position="389"/>
    </location>
</feature>
<feature type="compositionally biased region" description="Basic and acidic residues" evidence="2">
    <location>
        <begin position="10"/>
        <end position="26"/>
    </location>
</feature>
<feature type="compositionally biased region" description="Polar residues" evidence="2">
    <location>
        <begin position="27"/>
        <end position="36"/>
    </location>
</feature>
<feature type="glycosylation site" description="N-linked (GlcNAc...) asparagine" evidence="4">
    <location>
        <position position="653"/>
    </location>
</feature>